<name>HSL16_DICDI</name>
<comment type="similarity">
    <text evidence="1">Belongs to the hssA/B family.</text>
</comment>
<sequence length="89" mass="8421">MTLLASISSIGNVKSISKSNNFSSLSNSSLQSSNSIQCGGCGGGSPLIGTVGNLVGGVLVGTGIIVGTVVGTVNGVVGGLLSGPNCGCH</sequence>
<feature type="chain" id="PRO_0000330386" description="HssA/B-like protein 16">
    <location>
        <begin position="1"/>
        <end position="89"/>
    </location>
</feature>
<protein>
    <recommendedName>
        <fullName>HssA/B-like protein 16</fullName>
    </recommendedName>
</protein>
<gene>
    <name type="primary">hssl16</name>
    <name type="ORF">DDB_G0271718</name>
</gene>
<keyword id="KW-1185">Reference proteome</keyword>
<accession>Q75JC1</accession>
<accession>Q55AL5</accession>
<dbReference type="EMBL" id="AAFI02000006">
    <property type="protein sequence ID" value="EAL71549.1"/>
    <property type="molecule type" value="Genomic_DNA"/>
</dbReference>
<dbReference type="RefSeq" id="XP_645507.1">
    <property type="nucleotide sequence ID" value="XM_640415.1"/>
</dbReference>
<dbReference type="FunCoup" id="Q75JC1">
    <property type="interactions" value="243"/>
</dbReference>
<dbReference type="PaxDb" id="44689-DDB0238814"/>
<dbReference type="EnsemblProtists" id="EAL71549">
    <property type="protein sequence ID" value="EAL71549"/>
    <property type="gene ID" value="DDB_G0271718"/>
</dbReference>
<dbReference type="GeneID" id="8618136"/>
<dbReference type="KEGG" id="ddi:DDB_G0271718"/>
<dbReference type="dictyBase" id="DDB_G0271718">
    <property type="gene designation" value="sigN9"/>
</dbReference>
<dbReference type="eggNOG" id="ENOG502RIQ1">
    <property type="taxonomic scope" value="Eukaryota"/>
</dbReference>
<dbReference type="HOGENOM" id="CLU_190274_0_0_1"/>
<dbReference type="InParanoid" id="Q75JC1"/>
<dbReference type="PRO" id="PR:Q75JC1"/>
<dbReference type="Proteomes" id="UP000002195">
    <property type="component" value="Chromosome 2"/>
</dbReference>
<dbReference type="GO" id="GO:0030587">
    <property type="term" value="P:sorocarp development"/>
    <property type="evidence" value="ECO:0000318"/>
    <property type="project" value="GO_Central"/>
</dbReference>
<dbReference type="InterPro" id="IPR008455">
    <property type="entry name" value="HssA/B-related"/>
</dbReference>
<dbReference type="PANTHER" id="PTHR31857">
    <property type="entry name" value="HSSA/B-LIKE PROTEIN 17-RELATED"/>
    <property type="match status" value="1"/>
</dbReference>
<dbReference type="PANTHER" id="PTHR31857:SF2">
    <property type="entry name" value="HSSA_B-LIKE PROTEIN 17-RELATED"/>
    <property type="match status" value="1"/>
</dbReference>
<dbReference type="Pfam" id="PF05710">
    <property type="entry name" value="Coiled"/>
    <property type="match status" value="1"/>
</dbReference>
<reference key="1">
    <citation type="journal article" date="2002" name="Nature">
        <title>Sequence and analysis of chromosome 2 of Dictyostelium discoideum.</title>
        <authorList>
            <person name="Gloeckner G."/>
            <person name="Eichinger L."/>
            <person name="Szafranski K."/>
            <person name="Pachebat J.A."/>
            <person name="Bankier A.T."/>
            <person name="Dear P.H."/>
            <person name="Lehmann R."/>
            <person name="Baumgart C."/>
            <person name="Parra G."/>
            <person name="Abril J.F."/>
            <person name="Guigo R."/>
            <person name="Kumpf K."/>
            <person name="Tunggal B."/>
            <person name="Cox E.C."/>
            <person name="Quail M.A."/>
            <person name="Platzer M."/>
            <person name="Rosenthal A."/>
            <person name="Noegel A.A."/>
        </authorList>
    </citation>
    <scope>NUCLEOTIDE SEQUENCE [LARGE SCALE GENOMIC DNA]</scope>
    <source>
        <strain>AX4</strain>
    </source>
</reference>
<reference key="2">
    <citation type="journal article" date="2005" name="Nature">
        <title>The genome of the social amoeba Dictyostelium discoideum.</title>
        <authorList>
            <person name="Eichinger L."/>
            <person name="Pachebat J.A."/>
            <person name="Gloeckner G."/>
            <person name="Rajandream M.A."/>
            <person name="Sucgang R."/>
            <person name="Berriman M."/>
            <person name="Song J."/>
            <person name="Olsen R."/>
            <person name="Szafranski K."/>
            <person name="Xu Q."/>
            <person name="Tunggal B."/>
            <person name="Kummerfeld S."/>
            <person name="Madera M."/>
            <person name="Konfortov B.A."/>
            <person name="Rivero F."/>
            <person name="Bankier A.T."/>
            <person name="Lehmann R."/>
            <person name="Hamlin N."/>
            <person name="Davies R."/>
            <person name="Gaudet P."/>
            <person name="Fey P."/>
            <person name="Pilcher K."/>
            <person name="Chen G."/>
            <person name="Saunders D."/>
            <person name="Sodergren E.J."/>
            <person name="Davis P."/>
            <person name="Kerhornou A."/>
            <person name="Nie X."/>
            <person name="Hall N."/>
            <person name="Anjard C."/>
            <person name="Hemphill L."/>
            <person name="Bason N."/>
            <person name="Farbrother P."/>
            <person name="Desany B."/>
            <person name="Just E."/>
            <person name="Morio T."/>
            <person name="Rost R."/>
            <person name="Churcher C.M."/>
            <person name="Cooper J."/>
            <person name="Haydock S."/>
            <person name="van Driessche N."/>
            <person name="Cronin A."/>
            <person name="Goodhead I."/>
            <person name="Muzny D.M."/>
            <person name="Mourier T."/>
            <person name="Pain A."/>
            <person name="Lu M."/>
            <person name="Harper D."/>
            <person name="Lindsay R."/>
            <person name="Hauser H."/>
            <person name="James K.D."/>
            <person name="Quiles M."/>
            <person name="Madan Babu M."/>
            <person name="Saito T."/>
            <person name="Buchrieser C."/>
            <person name="Wardroper A."/>
            <person name="Felder M."/>
            <person name="Thangavelu M."/>
            <person name="Johnson D."/>
            <person name="Knights A."/>
            <person name="Loulseged H."/>
            <person name="Mungall K.L."/>
            <person name="Oliver K."/>
            <person name="Price C."/>
            <person name="Quail M.A."/>
            <person name="Urushihara H."/>
            <person name="Hernandez J."/>
            <person name="Rabbinowitsch E."/>
            <person name="Steffen D."/>
            <person name="Sanders M."/>
            <person name="Ma J."/>
            <person name="Kohara Y."/>
            <person name="Sharp S."/>
            <person name="Simmonds M.N."/>
            <person name="Spiegler S."/>
            <person name="Tivey A."/>
            <person name="Sugano S."/>
            <person name="White B."/>
            <person name="Walker D."/>
            <person name="Woodward J.R."/>
            <person name="Winckler T."/>
            <person name="Tanaka Y."/>
            <person name="Shaulsky G."/>
            <person name="Schleicher M."/>
            <person name="Weinstock G.M."/>
            <person name="Rosenthal A."/>
            <person name="Cox E.C."/>
            <person name="Chisholm R.L."/>
            <person name="Gibbs R.A."/>
            <person name="Loomis W.F."/>
            <person name="Platzer M."/>
            <person name="Kay R.R."/>
            <person name="Williams J.G."/>
            <person name="Dear P.H."/>
            <person name="Noegel A.A."/>
            <person name="Barrell B.G."/>
            <person name="Kuspa A."/>
        </authorList>
    </citation>
    <scope>NUCLEOTIDE SEQUENCE [LARGE SCALE GENOMIC DNA]</scope>
    <source>
        <strain>AX4</strain>
    </source>
</reference>
<proteinExistence type="inferred from homology"/>
<evidence type="ECO:0000305" key="1"/>
<organism>
    <name type="scientific">Dictyostelium discoideum</name>
    <name type="common">Social amoeba</name>
    <dbReference type="NCBI Taxonomy" id="44689"/>
    <lineage>
        <taxon>Eukaryota</taxon>
        <taxon>Amoebozoa</taxon>
        <taxon>Evosea</taxon>
        <taxon>Eumycetozoa</taxon>
        <taxon>Dictyostelia</taxon>
        <taxon>Dictyosteliales</taxon>
        <taxon>Dictyosteliaceae</taxon>
        <taxon>Dictyostelium</taxon>
    </lineage>
</organism>